<organism>
    <name type="scientific">Chlorobium phaeobacteroides (strain DSM 266 / SMG 266 / 2430)</name>
    <dbReference type="NCBI Taxonomy" id="290317"/>
    <lineage>
        <taxon>Bacteria</taxon>
        <taxon>Pseudomonadati</taxon>
        <taxon>Chlorobiota</taxon>
        <taxon>Chlorobiia</taxon>
        <taxon>Chlorobiales</taxon>
        <taxon>Chlorobiaceae</taxon>
        <taxon>Chlorobium/Pelodictyon group</taxon>
        <taxon>Chlorobium</taxon>
    </lineage>
</organism>
<comment type="function">
    <text evidence="1">Single strand-specific metallo-endoribonuclease involved in late-stage 70S ribosome quality control and in maturation of the 3' terminus of the 16S rRNA.</text>
</comment>
<comment type="cofactor">
    <cofactor evidence="1">
        <name>Zn(2+)</name>
        <dbReference type="ChEBI" id="CHEBI:29105"/>
    </cofactor>
    <text evidence="1">Binds 1 zinc ion.</text>
</comment>
<comment type="subcellular location">
    <subcellularLocation>
        <location evidence="1">Cytoplasm</location>
    </subcellularLocation>
</comment>
<comment type="similarity">
    <text evidence="1">Belongs to the endoribonuclease YbeY family.</text>
</comment>
<gene>
    <name evidence="1" type="primary">ybeY</name>
    <name type="ordered locus">Cpha266_1736</name>
</gene>
<accession>A1BH76</accession>
<name>YBEY_CHLPD</name>
<reference key="1">
    <citation type="submission" date="2006-12" db="EMBL/GenBank/DDBJ databases">
        <title>Complete sequence of Chlorobium phaeobacteroides DSM 266.</title>
        <authorList>
            <consortium name="US DOE Joint Genome Institute"/>
            <person name="Copeland A."/>
            <person name="Lucas S."/>
            <person name="Lapidus A."/>
            <person name="Barry K."/>
            <person name="Detter J.C."/>
            <person name="Glavina del Rio T."/>
            <person name="Hammon N."/>
            <person name="Israni S."/>
            <person name="Pitluck S."/>
            <person name="Goltsman E."/>
            <person name="Schmutz J."/>
            <person name="Larimer F."/>
            <person name="Land M."/>
            <person name="Hauser L."/>
            <person name="Mikhailova N."/>
            <person name="Li T."/>
            <person name="Overmann J."/>
            <person name="Bryant D.A."/>
            <person name="Richardson P."/>
        </authorList>
    </citation>
    <scope>NUCLEOTIDE SEQUENCE [LARGE SCALE GENOMIC DNA]</scope>
    <source>
        <strain>DSM 266 / SMG 266 / 2430</strain>
    </source>
</reference>
<proteinExistence type="inferred from homology"/>
<sequence>MTMPLQIYNTTRRELAESVLTEVVTTVLQEEGFLIESLVAVYCGNKMIHRINREFLGHDYPTDTITFSYSKGSEIDGEFYISLDAVEENALRYKVGFDEELMRVTIHSALHLAGYQDGKDEERVQMQEKEALYLKRFVTPST</sequence>
<dbReference type="EC" id="3.1.-.-" evidence="1"/>
<dbReference type="EMBL" id="CP000492">
    <property type="protein sequence ID" value="ABL65753.1"/>
    <property type="molecule type" value="Genomic_DNA"/>
</dbReference>
<dbReference type="SMR" id="A1BH76"/>
<dbReference type="STRING" id="290317.Cpha266_1736"/>
<dbReference type="KEGG" id="cph:Cpha266_1736"/>
<dbReference type="eggNOG" id="COG0319">
    <property type="taxonomic scope" value="Bacteria"/>
</dbReference>
<dbReference type="HOGENOM" id="CLU_106710_3_3_10"/>
<dbReference type="OrthoDB" id="9811984at2"/>
<dbReference type="Proteomes" id="UP000008701">
    <property type="component" value="Chromosome"/>
</dbReference>
<dbReference type="GO" id="GO:0005737">
    <property type="term" value="C:cytoplasm"/>
    <property type="evidence" value="ECO:0007669"/>
    <property type="project" value="UniProtKB-SubCell"/>
</dbReference>
<dbReference type="GO" id="GO:0004222">
    <property type="term" value="F:metalloendopeptidase activity"/>
    <property type="evidence" value="ECO:0007669"/>
    <property type="project" value="InterPro"/>
</dbReference>
<dbReference type="GO" id="GO:0004521">
    <property type="term" value="F:RNA endonuclease activity"/>
    <property type="evidence" value="ECO:0007669"/>
    <property type="project" value="UniProtKB-UniRule"/>
</dbReference>
<dbReference type="GO" id="GO:0008270">
    <property type="term" value="F:zinc ion binding"/>
    <property type="evidence" value="ECO:0007669"/>
    <property type="project" value="UniProtKB-UniRule"/>
</dbReference>
<dbReference type="GO" id="GO:0006364">
    <property type="term" value="P:rRNA processing"/>
    <property type="evidence" value="ECO:0007669"/>
    <property type="project" value="UniProtKB-UniRule"/>
</dbReference>
<dbReference type="Gene3D" id="3.40.390.30">
    <property type="entry name" value="Metalloproteases ('zincins'), catalytic domain"/>
    <property type="match status" value="1"/>
</dbReference>
<dbReference type="HAMAP" id="MF_00009">
    <property type="entry name" value="Endoribonucl_YbeY"/>
    <property type="match status" value="1"/>
</dbReference>
<dbReference type="InterPro" id="IPR023091">
    <property type="entry name" value="MetalPrtase_cat_dom_sf_prd"/>
</dbReference>
<dbReference type="InterPro" id="IPR002036">
    <property type="entry name" value="YbeY"/>
</dbReference>
<dbReference type="InterPro" id="IPR020549">
    <property type="entry name" value="YbeY_CS"/>
</dbReference>
<dbReference type="NCBIfam" id="TIGR00043">
    <property type="entry name" value="rRNA maturation RNase YbeY"/>
    <property type="match status" value="1"/>
</dbReference>
<dbReference type="PANTHER" id="PTHR46986">
    <property type="entry name" value="ENDORIBONUCLEASE YBEY, CHLOROPLASTIC"/>
    <property type="match status" value="1"/>
</dbReference>
<dbReference type="PANTHER" id="PTHR46986:SF1">
    <property type="entry name" value="ENDORIBONUCLEASE YBEY, CHLOROPLASTIC"/>
    <property type="match status" value="1"/>
</dbReference>
<dbReference type="Pfam" id="PF02130">
    <property type="entry name" value="YbeY"/>
    <property type="match status" value="1"/>
</dbReference>
<dbReference type="SUPFAM" id="SSF55486">
    <property type="entry name" value="Metalloproteases ('zincins'), catalytic domain"/>
    <property type="match status" value="1"/>
</dbReference>
<dbReference type="PROSITE" id="PS01306">
    <property type="entry name" value="UPF0054"/>
    <property type="match status" value="1"/>
</dbReference>
<evidence type="ECO:0000255" key="1">
    <source>
        <dbReference type="HAMAP-Rule" id="MF_00009"/>
    </source>
</evidence>
<keyword id="KW-0963">Cytoplasm</keyword>
<keyword id="KW-0255">Endonuclease</keyword>
<keyword id="KW-0378">Hydrolase</keyword>
<keyword id="KW-0479">Metal-binding</keyword>
<keyword id="KW-0540">Nuclease</keyword>
<keyword id="KW-1185">Reference proteome</keyword>
<keyword id="KW-0690">Ribosome biogenesis</keyword>
<keyword id="KW-0698">rRNA processing</keyword>
<keyword id="KW-0862">Zinc</keyword>
<feature type="chain" id="PRO_0000284186" description="Endoribonuclease YbeY">
    <location>
        <begin position="1"/>
        <end position="142"/>
    </location>
</feature>
<feature type="binding site" evidence="1">
    <location>
        <position position="107"/>
    </location>
    <ligand>
        <name>Zn(2+)</name>
        <dbReference type="ChEBI" id="CHEBI:29105"/>
        <note>catalytic</note>
    </ligand>
</feature>
<feature type="binding site" evidence="1">
    <location>
        <position position="111"/>
    </location>
    <ligand>
        <name>Zn(2+)</name>
        <dbReference type="ChEBI" id="CHEBI:29105"/>
        <note>catalytic</note>
    </ligand>
</feature>
<feature type="binding site" evidence="1">
    <location>
        <position position="117"/>
    </location>
    <ligand>
        <name>Zn(2+)</name>
        <dbReference type="ChEBI" id="CHEBI:29105"/>
        <note>catalytic</note>
    </ligand>
</feature>
<protein>
    <recommendedName>
        <fullName evidence="1">Endoribonuclease YbeY</fullName>
        <ecNumber evidence="1">3.1.-.-</ecNumber>
    </recommendedName>
</protein>